<reference key="1">
    <citation type="journal article" date="2005" name="Science">
        <title>The transcriptional landscape of the mammalian genome.</title>
        <authorList>
            <person name="Carninci P."/>
            <person name="Kasukawa T."/>
            <person name="Katayama S."/>
            <person name="Gough J."/>
            <person name="Frith M.C."/>
            <person name="Maeda N."/>
            <person name="Oyama R."/>
            <person name="Ravasi T."/>
            <person name="Lenhard B."/>
            <person name="Wells C."/>
            <person name="Kodzius R."/>
            <person name="Shimokawa K."/>
            <person name="Bajic V.B."/>
            <person name="Brenner S.E."/>
            <person name="Batalov S."/>
            <person name="Forrest A.R."/>
            <person name="Zavolan M."/>
            <person name="Davis M.J."/>
            <person name="Wilming L.G."/>
            <person name="Aidinis V."/>
            <person name="Allen J.E."/>
            <person name="Ambesi-Impiombato A."/>
            <person name="Apweiler R."/>
            <person name="Aturaliya R.N."/>
            <person name="Bailey T.L."/>
            <person name="Bansal M."/>
            <person name="Baxter L."/>
            <person name="Beisel K.W."/>
            <person name="Bersano T."/>
            <person name="Bono H."/>
            <person name="Chalk A.M."/>
            <person name="Chiu K.P."/>
            <person name="Choudhary V."/>
            <person name="Christoffels A."/>
            <person name="Clutterbuck D.R."/>
            <person name="Crowe M.L."/>
            <person name="Dalla E."/>
            <person name="Dalrymple B.P."/>
            <person name="de Bono B."/>
            <person name="Della Gatta G."/>
            <person name="di Bernardo D."/>
            <person name="Down T."/>
            <person name="Engstrom P."/>
            <person name="Fagiolini M."/>
            <person name="Faulkner G."/>
            <person name="Fletcher C.F."/>
            <person name="Fukushima T."/>
            <person name="Furuno M."/>
            <person name="Futaki S."/>
            <person name="Gariboldi M."/>
            <person name="Georgii-Hemming P."/>
            <person name="Gingeras T.R."/>
            <person name="Gojobori T."/>
            <person name="Green R.E."/>
            <person name="Gustincich S."/>
            <person name="Harbers M."/>
            <person name="Hayashi Y."/>
            <person name="Hensch T.K."/>
            <person name="Hirokawa N."/>
            <person name="Hill D."/>
            <person name="Huminiecki L."/>
            <person name="Iacono M."/>
            <person name="Ikeo K."/>
            <person name="Iwama A."/>
            <person name="Ishikawa T."/>
            <person name="Jakt M."/>
            <person name="Kanapin A."/>
            <person name="Katoh M."/>
            <person name="Kawasawa Y."/>
            <person name="Kelso J."/>
            <person name="Kitamura H."/>
            <person name="Kitano H."/>
            <person name="Kollias G."/>
            <person name="Krishnan S.P."/>
            <person name="Kruger A."/>
            <person name="Kummerfeld S.K."/>
            <person name="Kurochkin I.V."/>
            <person name="Lareau L.F."/>
            <person name="Lazarevic D."/>
            <person name="Lipovich L."/>
            <person name="Liu J."/>
            <person name="Liuni S."/>
            <person name="McWilliam S."/>
            <person name="Madan Babu M."/>
            <person name="Madera M."/>
            <person name="Marchionni L."/>
            <person name="Matsuda H."/>
            <person name="Matsuzawa S."/>
            <person name="Miki H."/>
            <person name="Mignone F."/>
            <person name="Miyake S."/>
            <person name="Morris K."/>
            <person name="Mottagui-Tabar S."/>
            <person name="Mulder N."/>
            <person name="Nakano N."/>
            <person name="Nakauchi H."/>
            <person name="Ng P."/>
            <person name="Nilsson R."/>
            <person name="Nishiguchi S."/>
            <person name="Nishikawa S."/>
            <person name="Nori F."/>
            <person name="Ohara O."/>
            <person name="Okazaki Y."/>
            <person name="Orlando V."/>
            <person name="Pang K.C."/>
            <person name="Pavan W.J."/>
            <person name="Pavesi G."/>
            <person name="Pesole G."/>
            <person name="Petrovsky N."/>
            <person name="Piazza S."/>
            <person name="Reed J."/>
            <person name="Reid J.F."/>
            <person name="Ring B.Z."/>
            <person name="Ringwald M."/>
            <person name="Rost B."/>
            <person name="Ruan Y."/>
            <person name="Salzberg S.L."/>
            <person name="Sandelin A."/>
            <person name="Schneider C."/>
            <person name="Schoenbach C."/>
            <person name="Sekiguchi K."/>
            <person name="Semple C.A."/>
            <person name="Seno S."/>
            <person name="Sessa L."/>
            <person name="Sheng Y."/>
            <person name="Shibata Y."/>
            <person name="Shimada H."/>
            <person name="Shimada K."/>
            <person name="Silva D."/>
            <person name="Sinclair B."/>
            <person name="Sperling S."/>
            <person name="Stupka E."/>
            <person name="Sugiura K."/>
            <person name="Sultana R."/>
            <person name="Takenaka Y."/>
            <person name="Taki K."/>
            <person name="Tammoja K."/>
            <person name="Tan S.L."/>
            <person name="Tang S."/>
            <person name="Taylor M.S."/>
            <person name="Tegner J."/>
            <person name="Teichmann S.A."/>
            <person name="Ueda H.R."/>
            <person name="van Nimwegen E."/>
            <person name="Verardo R."/>
            <person name="Wei C.L."/>
            <person name="Yagi K."/>
            <person name="Yamanishi H."/>
            <person name="Zabarovsky E."/>
            <person name="Zhu S."/>
            <person name="Zimmer A."/>
            <person name="Hide W."/>
            <person name="Bult C."/>
            <person name="Grimmond S.M."/>
            <person name="Teasdale R.D."/>
            <person name="Liu E.T."/>
            <person name="Brusic V."/>
            <person name="Quackenbush J."/>
            <person name="Wahlestedt C."/>
            <person name="Mattick J.S."/>
            <person name="Hume D.A."/>
            <person name="Kai C."/>
            <person name="Sasaki D."/>
            <person name="Tomaru Y."/>
            <person name="Fukuda S."/>
            <person name="Kanamori-Katayama M."/>
            <person name="Suzuki M."/>
            <person name="Aoki J."/>
            <person name="Arakawa T."/>
            <person name="Iida J."/>
            <person name="Imamura K."/>
            <person name="Itoh M."/>
            <person name="Kato T."/>
            <person name="Kawaji H."/>
            <person name="Kawagashira N."/>
            <person name="Kawashima T."/>
            <person name="Kojima M."/>
            <person name="Kondo S."/>
            <person name="Konno H."/>
            <person name="Nakano K."/>
            <person name="Ninomiya N."/>
            <person name="Nishio T."/>
            <person name="Okada M."/>
            <person name="Plessy C."/>
            <person name="Shibata K."/>
            <person name="Shiraki T."/>
            <person name="Suzuki S."/>
            <person name="Tagami M."/>
            <person name="Waki K."/>
            <person name="Watahiki A."/>
            <person name="Okamura-Oho Y."/>
            <person name="Suzuki H."/>
            <person name="Kawai J."/>
            <person name="Hayashizaki Y."/>
        </authorList>
    </citation>
    <scope>NUCLEOTIDE SEQUENCE [LARGE SCALE MRNA]</scope>
    <source>
        <strain>C57BL/6J</strain>
        <tissue>Cerebellum</tissue>
    </source>
</reference>
<reference key="2">
    <citation type="submission" date="2002-04" db="EMBL/GenBank/DDBJ databases">
        <authorList>
            <person name="Guo J.H."/>
        </authorList>
    </citation>
    <scope>NUCLEOTIDE SEQUENCE [LARGE SCALE MRNA]</scope>
    <source>
        <strain>BALB/cJ</strain>
        <tissue>Brain</tissue>
    </source>
</reference>
<reference key="3">
    <citation type="journal article" date="2004" name="Genome Res.">
        <title>The status, quality, and expansion of the NIH full-length cDNA project: the Mammalian Gene Collection (MGC).</title>
        <authorList>
            <consortium name="The MGC Project Team"/>
        </authorList>
    </citation>
    <scope>NUCLEOTIDE SEQUENCE [LARGE SCALE MRNA]</scope>
    <source>
        <strain>C57BL/6J</strain>
        <tissue>Brain</tissue>
    </source>
</reference>
<reference key="4">
    <citation type="journal article" date="2010" name="Cell">
        <title>A tissue-specific atlas of mouse protein phosphorylation and expression.</title>
        <authorList>
            <person name="Huttlin E.L."/>
            <person name="Jedrychowski M.P."/>
            <person name="Elias J.E."/>
            <person name="Goswami T."/>
            <person name="Rad R."/>
            <person name="Beausoleil S.A."/>
            <person name="Villen J."/>
            <person name="Haas W."/>
            <person name="Sowa M.E."/>
            <person name="Gygi S.P."/>
        </authorList>
    </citation>
    <scope>PHOSPHORYLATION [LARGE SCALE ANALYSIS] AT THR-236; SER-240; SER-765; SER-766; SER-769 AND SER-824</scope>
    <scope>IDENTIFICATION BY MASS SPECTROMETRY [LARGE SCALE ANALYSIS]</scope>
    <source>
        <tissue>Brain</tissue>
        <tissue>Brown adipose tissue</tissue>
        <tissue>Kidney</tissue>
        <tissue>Lung</tissue>
        <tissue>Spleen</tissue>
        <tissue>Testis</tissue>
    </source>
</reference>
<reference key="5">
    <citation type="journal article" date="2010" name="Science">
        <title>Systematic analysis of human protein complexes identifies chromosome segregation proteins.</title>
        <authorList>
            <person name="Hutchins J.R."/>
            <person name="Toyoda Y."/>
            <person name="Hegemann B."/>
            <person name="Poser I."/>
            <person name="Heriche J.K."/>
            <person name="Sykora M.M."/>
            <person name="Augsburg M."/>
            <person name="Hudecz O."/>
            <person name="Buschhorn B.A."/>
            <person name="Bulkescher J."/>
            <person name="Conrad C."/>
            <person name="Comartin D."/>
            <person name="Schleiffer A."/>
            <person name="Sarov M."/>
            <person name="Pozniakovsky A."/>
            <person name="Slabicki M.M."/>
            <person name="Schloissnig S."/>
            <person name="Steinmacher I."/>
            <person name="Leuschner M."/>
            <person name="Ssykor A."/>
            <person name="Lawo S."/>
            <person name="Pelletier L."/>
            <person name="Stark H."/>
            <person name="Nasmyth K."/>
            <person name="Ellenberg J."/>
            <person name="Durbin R."/>
            <person name="Buchholz F."/>
            <person name="Mechtler K."/>
            <person name="Hyman A.A."/>
            <person name="Peters J.M."/>
        </authorList>
    </citation>
    <scope>INTERACTION WITH CEP120</scope>
</reference>
<keyword id="KW-0131">Cell cycle</keyword>
<keyword id="KW-0132">Cell division</keyword>
<keyword id="KW-0175">Coiled coil</keyword>
<keyword id="KW-0963">Cytoplasm</keyword>
<keyword id="KW-0206">Cytoskeleton</keyword>
<keyword id="KW-0498">Mitosis</keyword>
<keyword id="KW-0597">Phosphoprotein</keyword>
<keyword id="KW-1185">Reference proteome</keyword>
<sequence length="860" mass="95645">MSLIRVNRFGPRGGGRKTLKVKKKAAVRQEWDNTVNDLTVHRATPEDLVRRHEMHKSKNRALVHWELQEKALKRKWKKQKPETSSLEKRKLSIMKEILSDQYLTQDVLEKSDHLMAAAKGLFADVPRKRTGFPNVTRAPDSSQSHTGINQDPVTQSILNESIIEPQALNEVDDAGEQSTAHSQSEDSENELPNSLSQHSNRSTERFLHQLKEENSELINQLWTDIQQKIATQSQRTPPGSPSSELSAEDQKAALNATDAVKRIQAGPQPEEAAEPVDFSSSYLGQVLNTRKQKPLLAKVKRKQDMHAASKQKTNMLSSSTASADRPSSTGSSLDVLKHVIHEVEHEMEEYERCTGREVTGLQGGQGLTGFTLSLVSSLCRLVRYLKESEIQLRKEVETRQQLEQMLGDHRELIDALTAEILSLREENSTMQARLQQYMVTTDEQLISLTHAIKNCPVINNSRQESQAPERAAMGRRLVDNVEGPVISSNGSMPLMFRGEEVVEFPQEELPVKLSQGPTPTENLNLANNFPTHIFEPAVMLTPPRQKSNSEFSPLQDVLRRTVQTRPAPRIPPTVEVIEKEQNWEKKALPIDPDIQNSSEENRLFTQRWRVSHMGEDLENKGQPAFVSLSQPPCSSLPSTQQPRNPVLSEEPTVLGDGQQLRTSEALVQRKDIMARIAELTLQNSAIKAHLNNITSSGGEQGDGLREPRKQGSASEVSTNFPAVQSLTPSSMEERIAELNRQSMEARSKLLQLIEQQKLVGLNLSSSPVSPVESPLRAWAEEGKRTIEVSVPGMEASESSKCNTVSPVSGNSSRRSSGAISNSCSPLNATSGSGKFTPVNPRTKTEKKNEEGWFALSAHIP</sequence>
<protein>
    <recommendedName>
        <fullName>Spindle and centriole-associated protein 1</fullName>
    </recommendedName>
    <alternativeName>
        <fullName>Coiled-coil domain-containing protein 52</fullName>
    </alternativeName>
</protein>
<organism>
    <name type="scientific">Mus musculus</name>
    <name type="common">Mouse</name>
    <dbReference type="NCBI Taxonomy" id="10090"/>
    <lineage>
        <taxon>Eukaryota</taxon>
        <taxon>Metazoa</taxon>
        <taxon>Chordata</taxon>
        <taxon>Craniata</taxon>
        <taxon>Vertebrata</taxon>
        <taxon>Euteleostomi</taxon>
        <taxon>Mammalia</taxon>
        <taxon>Eutheria</taxon>
        <taxon>Euarchontoglires</taxon>
        <taxon>Glires</taxon>
        <taxon>Rodentia</taxon>
        <taxon>Myomorpha</taxon>
        <taxon>Muroidea</taxon>
        <taxon>Muridae</taxon>
        <taxon>Murinae</taxon>
        <taxon>Mus</taxon>
        <taxon>Mus</taxon>
    </lineage>
</organism>
<evidence type="ECO:0000250" key="1"/>
<evidence type="ECO:0000250" key="2">
    <source>
        <dbReference type="UniProtKB" id="Q8N0Z3"/>
    </source>
</evidence>
<evidence type="ECO:0000255" key="3"/>
<evidence type="ECO:0000256" key="4">
    <source>
        <dbReference type="SAM" id="MobiDB-lite"/>
    </source>
</evidence>
<evidence type="ECO:0000269" key="5">
    <source>
    </source>
</evidence>
<evidence type="ECO:0000305" key="6"/>
<evidence type="ECO:0007744" key="7">
    <source>
    </source>
</evidence>
<feature type="chain" id="PRO_0000282414" description="Spindle and centriole-associated protein 1">
    <location>
        <begin position="1"/>
        <end position="860"/>
    </location>
</feature>
<feature type="region of interest" description="Disordered" evidence="4">
    <location>
        <begin position="127"/>
        <end position="150"/>
    </location>
</feature>
<feature type="region of interest" description="Disordered" evidence="4">
    <location>
        <begin position="172"/>
        <end position="201"/>
    </location>
</feature>
<feature type="region of interest" description="Disordered" evidence="4">
    <location>
        <begin position="230"/>
        <end position="250"/>
    </location>
</feature>
<feature type="region of interest" description="Disordered" evidence="4">
    <location>
        <begin position="294"/>
        <end position="332"/>
    </location>
</feature>
<feature type="region of interest" description="Disordered" evidence="4">
    <location>
        <begin position="623"/>
        <end position="645"/>
    </location>
</feature>
<feature type="region of interest" description="Disordered" evidence="4">
    <location>
        <begin position="693"/>
        <end position="718"/>
    </location>
</feature>
<feature type="region of interest" description="Disordered" evidence="4">
    <location>
        <begin position="792"/>
        <end position="860"/>
    </location>
</feature>
<feature type="coiled-coil region" evidence="3">
    <location>
        <begin position="383"/>
        <end position="439"/>
    </location>
</feature>
<feature type="coiled-coil region" evidence="3">
    <location>
        <begin position="729"/>
        <end position="757"/>
    </location>
</feature>
<feature type="compositionally biased region" description="Polar residues" evidence="4">
    <location>
        <begin position="139"/>
        <end position="150"/>
    </location>
</feature>
<feature type="compositionally biased region" description="Polar residues" evidence="4">
    <location>
        <begin position="190"/>
        <end position="200"/>
    </location>
</feature>
<feature type="compositionally biased region" description="Polar residues" evidence="4">
    <location>
        <begin position="230"/>
        <end position="245"/>
    </location>
</feature>
<feature type="compositionally biased region" description="Low complexity" evidence="4">
    <location>
        <begin position="317"/>
        <end position="329"/>
    </location>
</feature>
<feature type="compositionally biased region" description="Low complexity" evidence="4">
    <location>
        <begin position="627"/>
        <end position="642"/>
    </location>
</feature>
<feature type="compositionally biased region" description="Low complexity" evidence="4">
    <location>
        <begin position="804"/>
        <end position="824"/>
    </location>
</feature>
<feature type="modified residue" description="Phosphothreonine" evidence="7">
    <location>
        <position position="236"/>
    </location>
</feature>
<feature type="modified residue" description="Phosphoserine" evidence="7">
    <location>
        <position position="240"/>
    </location>
</feature>
<feature type="modified residue" description="Phosphoserine" evidence="2">
    <location>
        <position position="648"/>
    </location>
</feature>
<feature type="modified residue" description="Phosphoserine" evidence="7">
    <location>
        <position position="765"/>
    </location>
</feature>
<feature type="modified residue" description="Phosphoserine" evidence="7">
    <location>
        <position position="766"/>
    </location>
</feature>
<feature type="modified residue" description="Phosphoserine" evidence="7">
    <location>
        <position position="769"/>
    </location>
</feature>
<feature type="modified residue" description="Phosphoserine" evidence="7">
    <location>
        <position position="824"/>
    </location>
</feature>
<feature type="sequence conflict" description="In Ref. 1; BAC33458." evidence="6" ref="1">
    <original>E</original>
    <variation>G</variation>
    <location>
        <position position="482"/>
    </location>
</feature>
<proteinExistence type="evidence at protein level"/>
<comment type="function">
    <text evidence="1">Regulator required for centriole duplication, for proper bipolar spindle formation and chromosome congression in mitosis.</text>
</comment>
<comment type="subunit">
    <text evidence="5">Interacts with CEP120.</text>
</comment>
<comment type="subcellular location">
    <subcellularLocation>
        <location evidence="1">Cytoplasm</location>
        <location evidence="1">Cytoskeleton</location>
        <location evidence="1">Microtubule organizing center</location>
        <location evidence="1">Centrosome</location>
        <location evidence="1">Centriole</location>
    </subcellularLocation>
    <subcellularLocation>
        <location evidence="1">Cytoplasm</location>
        <location evidence="1">Cytoskeleton</location>
        <location evidence="1">Spindle</location>
    </subcellularLocation>
</comment>
<name>SPICE_MOUSE</name>
<accession>Q8C804</accession>
<accession>Q8K3I7</accession>
<gene>
    <name type="primary">Spice1</name>
    <name type="synonym">Ccdc52</name>
    <name type="synonym">D16Ertd480e</name>
</gene>
<dbReference type="EMBL" id="AK048789">
    <property type="protein sequence ID" value="BAC33458.1"/>
    <property type="molecule type" value="mRNA"/>
</dbReference>
<dbReference type="EMBL" id="AY099108">
    <property type="protein sequence ID" value="AAM34496.1"/>
    <property type="molecule type" value="mRNA"/>
</dbReference>
<dbReference type="EMBL" id="BC052381">
    <property type="protein sequence ID" value="AAH52381.1"/>
    <property type="molecule type" value="mRNA"/>
</dbReference>
<dbReference type="EMBL" id="BC056960">
    <property type="protein sequence ID" value="AAH56960.1"/>
    <property type="molecule type" value="mRNA"/>
</dbReference>
<dbReference type="CCDS" id="CCDS37345.1"/>
<dbReference type="RefSeq" id="NP_001403844.1">
    <property type="nucleotide sequence ID" value="NM_001416915.1"/>
</dbReference>
<dbReference type="RefSeq" id="NP_001403845.1">
    <property type="nucleotide sequence ID" value="NM_001416916.1"/>
</dbReference>
<dbReference type="RefSeq" id="NP_653133.3">
    <property type="nucleotide sequence ID" value="NM_144550.4"/>
</dbReference>
<dbReference type="RefSeq" id="XP_017172412.1">
    <property type="nucleotide sequence ID" value="XM_017316923.1"/>
</dbReference>
<dbReference type="SMR" id="Q8C804"/>
<dbReference type="BioGRID" id="229332">
    <property type="interactions" value="3"/>
</dbReference>
<dbReference type="FunCoup" id="Q8C804">
    <property type="interactions" value="1306"/>
</dbReference>
<dbReference type="IntAct" id="Q8C804">
    <property type="interactions" value="4"/>
</dbReference>
<dbReference type="STRING" id="10090.ENSMUSP00000058832"/>
<dbReference type="GlyGen" id="Q8C804">
    <property type="glycosylation" value="1 site"/>
</dbReference>
<dbReference type="iPTMnet" id="Q8C804"/>
<dbReference type="PhosphoSitePlus" id="Q8C804"/>
<dbReference type="PaxDb" id="10090-ENSMUSP00000058832"/>
<dbReference type="PeptideAtlas" id="Q8C804"/>
<dbReference type="ProteomicsDB" id="257350"/>
<dbReference type="Pumba" id="Q8C804"/>
<dbReference type="DNASU" id="212514"/>
<dbReference type="Ensembl" id="ENSMUST00000050897.7">
    <property type="protein sequence ID" value="ENSMUSP00000058832.7"/>
    <property type="gene ID" value="ENSMUSG00000043065.13"/>
</dbReference>
<dbReference type="GeneID" id="212514"/>
<dbReference type="KEGG" id="mmu:212514"/>
<dbReference type="UCSC" id="uc007zhg.2">
    <property type="organism name" value="mouse"/>
</dbReference>
<dbReference type="AGR" id="MGI:1196252"/>
<dbReference type="CTD" id="152185"/>
<dbReference type="MGI" id="MGI:1196252">
    <property type="gene designation" value="Spice1"/>
</dbReference>
<dbReference type="VEuPathDB" id="HostDB:ENSMUSG00000043065"/>
<dbReference type="eggNOG" id="ENOG502QQ0H">
    <property type="taxonomic scope" value="Eukaryota"/>
</dbReference>
<dbReference type="GeneTree" id="ENSGT00390000006207"/>
<dbReference type="HOGENOM" id="CLU_016571_0_0_1"/>
<dbReference type="InParanoid" id="Q8C804"/>
<dbReference type="OMA" id="REQSPKH"/>
<dbReference type="OrthoDB" id="6361178at2759"/>
<dbReference type="PhylomeDB" id="Q8C804"/>
<dbReference type="TreeFam" id="TF333301"/>
<dbReference type="BioGRID-ORCS" id="212514">
    <property type="hits" value="4 hits in 76 CRISPR screens"/>
</dbReference>
<dbReference type="PRO" id="PR:Q8C804"/>
<dbReference type="Proteomes" id="UP000000589">
    <property type="component" value="Chromosome 16"/>
</dbReference>
<dbReference type="RNAct" id="Q8C804">
    <property type="molecule type" value="protein"/>
</dbReference>
<dbReference type="Bgee" id="ENSMUSG00000043065">
    <property type="expression patterns" value="Expressed in spermatocyte and 273 other cell types or tissues"/>
</dbReference>
<dbReference type="GO" id="GO:0005814">
    <property type="term" value="C:centriole"/>
    <property type="evidence" value="ECO:0000250"/>
    <property type="project" value="UniProtKB"/>
</dbReference>
<dbReference type="GO" id="GO:0005813">
    <property type="term" value="C:centrosome"/>
    <property type="evidence" value="ECO:0007669"/>
    <property type="project" value="Ensembl"/>
</dbReference>
<dbReference type="GO" id="GO:0036064">
    <property type="term" value="C:ciliary basal body"/>
    <property type="evidence" value="ECO:0007669"/>
    <property type="project" value="Ensembl"/>
</dbReference>
<dbReference type="GO" id="GO:0005737">
    <property type="term" value="C:cytoplasm"/>
    <property type="evidence" value="ECO:0007669"/>
    <property type="project" value="UniProtKB-KW"/>
</dbReference>
<dbReference type="GO" id="GO:0043231">
    <property type="term" value="C:intracellular membrane-bounded organelle"/>
    <property type="evidence" value="ECO:0007669"/>
    <property type="project" value="Ensembl"/>
</dbReference>
<dbReference type="GO" id="GO:0005886">
    <property type="term" value="C:plasma membrane"/>
    <property type="evidence" value="ECO:0007669"/>
    <property type="project" value="Ensembl"/>
</dbReference>
<dbReference type="GO" id="GO:0005819">
    <property type="term" value="C:spindle"/>
    <property type="evidence" value="ECO:0000250"/>
    <property type="project" value="UniProtKB"/>
</dbReference>
<dbReference type="GO" id="GO:0051301">
    <property type="term" value="P:cell division"/>
    <property type="evidence" value="ECO:0007669"/>
    <property type="project" value="UniProtKB-KW"/>
</dbReference>
<dbReference type="GO" id="GO:0051310">
    <property type="term" value="P:metaphase chromosome alignment"/>
    <property type="evidence" value="ECO:0007669"/>
    <property type="project" value="Ensembl"/>
</dbReference>
<dbReference type="GO" id="GO:0090307">
    <property type="term" value="P:mitotic spindle assembly"/>
    <property type="evidence" value="ECO:0000250"/>
    <property type="project" value="UniProtKB"/>
</dbReference>
<dbReference type="GO" id="GO:0046599">
    <property type="term" value="P:regulation of centriole replication"/>
    <property type="evidence" value="ECO:0000250"/>
    <property type="project" value="UniProtKB"/>
</dbReference>
<dbReference type="InterPro" id="IPR031387">
    <property type="entry name" value="SPICE1"/>
</dbReference>
<dbReference type="PANTHER" id="PTHR31167">
    <property type="entry name" value="SPINDLE AND CENTRIOLE ASSOCIATED PROTEIN 1 SPICE1"/>
    <property type="match status" value="1"/>
</dbReference>
<dbReference type="PANTHER" id="PTHR31167:SF3">
    <property type="entry name" value="SPINDLE AND CENTRIOLE-ASSOCIATED PROTEIN 1"/>
    <property type="match status" value="1"/>
</dbReference>
<dbReference type="Pfam" id="PF15678">
    <property type="entry name" value="SPICE"/>
    <property type="match status" value="1"/>
</dbReference>